<evidence type="ECO:0000250" key="1">
    <source>
        <dbReference type="UniProtKB" id="Q53AQ4"/>
    </source>
</evidence>
<evidence type="ECO:0000250" key="2">
    <source>
        <dbReference type="UniProtKB" id="Q9BVT8"/>
    </source>
</evidence>
<evidence type="ECO:0000250" key="3">
    <source>
        <dbReference type="UniProtKB" id="Q9JMG3"/>
    </source>
</evidence>
<evidence type="ECO:0000255" key="4"/>
<evidence type="ECO:0000255" key="5">
    <source>
        <dbReference type="PROSITE-ProRule" id="PRU00214"/>
    </source>
</evidence>
<evidence type="ECO:0000256" key="6">
    <source>
        <dbReference type="SAM" id="MobiDB-lite"/>
    </source>
</evidence>
<organism>
    <name type="scientific">Bos taurus</name>
    <name type="common">Bovine</name>
    <dbReference type="NCBI Taxonomy" id="9913"/>
    <lineage>
        <taxon>Eukaryota</taxon>
        <taxon>Metazoa</taxon>
        <taxon>Chordata</taxon>
        <taxon>Craniata</taxon>
        <taxon>Vertebrata</taxon>
        <taxon>Euteleostomi</taxon>
        <taxon>Mammalia</taxon>
        <taxon>Eutheria</taxon>
        <taxon>Laurasiatheria</taxon>
        <taxon>Artiodactyla</taxon>
        <taxon>Ruminantia</taxon>
        <taxon>Pecora</taxon>
        <taxon>Bovidae</taxon>
        <taxon>Bovinae</taxon>
        <taxon>Bos</taxon>
    </lineage>
</organism>
<sequence length="246" mass="26206">MALIEGVGDEVTILFSALACLLVLALAWVSTHTAEGADPLPQPSGTPTPTQPSEAMAVTDSIRGEAPGAETPGLRHRGQAAPPEPSVGLAATPPPPDSPQEPLVLRLKFLNDSEQVARAWPHDTIGSLKRTQFPGREQHVRLIYQGQLLGDDTQTLGSLHLPPNCVLHCHVSTRVGPPLPPCPPGSEPGPSGLEVGSLLLPLLLLLLLLLWYCQIQYRPFFPLTATLGLAGFTLLLSLLAFAMYRP</sequence>
<comment type="function">
    <text evidence="1 2 3">Involved in sterol-regulated ubiquitination and degradation of HMG-CoA reductase HMGCR. Involved in positive regulation of AMPA-selective glutamate receptor GRIA2 recycling to the cell surface. Acts as negative regulator of hepatocyte growth during regeneration.</text>
</comment>
<comment type="function">
    <molecule>iHOPS</molecule>
    <text evidence="3">May contribute to the regulation of translation during cell-cycle progression. May contribute to the regulation of cell proliferation. May be involved in centrosome assembly. Modulates stabilization and nucleolar localization of tumor suppressor CDKN2A and enhances association between CDKN2A and NPM1 (By similarity).</text>
</comment>
<comment type="subunit">
    <text evidence="1 2 3">Interacts with EEF1A1, GRIA2, GRIP1, CAMLG, TUBG1. Interacts with NPM1 and CDKN2A; TMUB1 can enhance interaction between NPM1 and CDKN2A and is proposed to bridge the proteins; proposed to be mediated by iHOPS. Interacts with ERLIN2 and AMFR; TMUB1 promotes the interaction of ERLIN2 with AMFR (By similarity).</text>
</comment>
<comment type="subcellular location">
    <subcellularLocation>
        <location evidence="3">Membrane</location>
        <topology evidence="3">Multi-pass membrane protein</topology>
    </subcellularLocation>
    <subcellularLocation>
        <location evidence="3">Postsynaptic cell membrane</location>
    </subcellularLocation>
    <subcellularLocation>
        <location evidence="1">Recycling endosome</location>
    </subcellularLocation>
    <subcellularLocation>
        <location evidence="3">Cytoplasm</location>
    </subcellularLocation>
    <subcellularLocation>
        <location evidence="3">Nucleus</location>
    </subcellularLocation>
    <subcellularLocation>
        <location evidence="3">Nucleus</location>
        <location evidence="3">Nucleolus</location>
    </subcellularLocation>
</comment>
<comment type="subcellular location">
    <molecule>iHOPS</molecule>
    <subcellularLocation>
        <location evidence="1 3">Cytoplasm</location>
    </subcellularLocation>
    <subcellularLocation>
        <location evidence="3">Cytoplasm</location>
        <location evidence="3">Cytoskeleton</location>
        <location evidence="3">Microtubule organizing center</location>
        <location evidence="3">Centrosome</location>
    </subcellularLocation>
    <subcellularLocation>
        <location evidence="3">Nucleus</location>
        <location evidence="3">Nucleolus</location>
    </subcellularLocation>
    <subcellularLocation>
        <location evidence="3">Nucleus</location>
    </subcellularLocation>
    <text evidence="3">iHOPS is proposed to be the shuttling form across different cellular compartments. XPO1-dependent exported from the nucleus in dividing cells. Predominantly nuclear during growth arrest.</text>
</comment>
<comment type="PTM">
    <molecule>iHOPS</molecule>
    <text evidence="3">Processed by regulated intramembrane proteolysis (RIP) in the N-terminus to release iHOPS from membranes.</text>
</comment>
<proteinExistence type="evidence at transcript level"/>
<gene>
    <name type="primary">TMUB1</name>
</gene>
<protein>
    <recommendedName>
        <fullName>Transmembrane and ubiquitin-like domain-containing protein 1</fullName>
    </recommendedName>
    <component>
        <recommendedName>
            <fullName>iHOPS</fullName>
        </recommendedName>
    </component>
</protein>
<name>TMUB1_BOVIN</name>
<dbReference type="EMBL" id="BC103270">
    <property type="protein sequence ID" value="AAI03271.1"/>
    <property type="molecule type" value="mRNA"/>
</dbReference>
<dbReference type="RefSeq" id="NP_001029847.1">
    <property type="nucleotide sequence ID" value="NM_001034675.1"/>
</dbReference>
<dbReference type="SMR" id="Q3ZBI9"/>
<dbReference type="FunCoup" id="Q3ZBI9">
    <property type="interactions" value="493"/>
</dbReference>
<dbReference type="STRING" id="9913.ENSBTAP00000014915"/>
<dbReference type="PaxDb" id="9913-ENSBTAP00000014915"/>
<dbReference type="GeneID" id="539388"/>
<dbReference type="KEGG" id="bta:539388"/>
<dbReference type="CTD" id="83590"/>
<dbReference type="eggNOG" id="ENOG502QU8U">
    <property type="taxonomic scope" value="Eukaryota"/>
</dbReference>
<dbReference type="HOGENOM" id="CLU_053940_1_0_1"/>
<dbReference type="InParanoid" id="Q3ZBI9"/>
<dbReference type="OrthoDB" id="161999at2759"/>
<dbReference type="TreeFam" id="TF329265"/>
<dbReference type="Proteomes" id="UP000009136">
    <property type="component" value="Unplaced"/>
</dbReference>
<dbReference type="GO" id="GO:0005813">
    <property type="term" value="C:centrosome"/>
    <property type="evidence" value="ECO:0007669"/>
    <property type="project" value="UniProtKB-SubCell"/>
</dbReference>
<dbReference type="GO" id="GO:0005730">
    <property type="term" value="C:nucleolus"/>
    <property type="evidence" value="ECO:0007669"/>
    <property type="project" value="UniProtKB-SubCell"/>
</dbReference>
<dbReference type="GO" id="GO:0045211">
    <property type="term" value="C:postsynaptic membrane"/>
    <property type="evidence" value="ECO:0007669"/>
    <property type="project" value="UniProtKB-SubCell"/>
</dbReference>
<dbReference type="GO" id="GO:0055037">
    <property type="term" value="C:recycling endosome"/>
    <property type="evidence" value="ECO:0007669"/>
    <property type="project" value="UniProtKB-SubCell"/>
</dbReference>
<dbReference type="GO" id="GO:0036503">
    <property type="term" value="P:ERAD pathway"/>
    <property type="evidence" value="ECO:0000318"/>
    <property type="project" value="GO_Central"/>
</dbReference>
<dbReference type="FunFam" id="3.10.20.90:FF:000181">
    <property type="entry name" value="transmembrane and ubiquitin-like domain-containing protein 1"/>
    <property type="match status" value="1"/>
</dbReference>
<dbReference type="Gene3D" id="3.10.20.90">
    <property type="entry name" value="Phosphatidylinositol 3-kinase Catalytic Subunit, Chain A, domain 1"/>
    <property type="match status" value="1"/>
</dbReference>
<dbReference type="InterPro" id="IPR040352">
    <property type="entry name" value="TMUB1/2"/>
</dbReference>
<dbReference type="InterPro" id="IPR000626">
    <property type="entry name" value="Ubiquitin-like_dom"/>
</dbReference>
<dbReference type="InterPro" id="IPR029071">
    <property type="entry name" value="Ubiquitin-like_domsf"/>
</dbReference>
<dbReference type="PANTHER" id="PTHR14557">
    <property type="entry name" value="PROTEIN C7ORF21"/>
    <property type="match status" value="1"/>
</dbReference>
<dbReference type="PANTHER" id="PTHR14557:SF3">
    <property type="entry name" value="TRANSMEMBRANE AND UBIQUITIN-LIKE DOMAIN-CONTAINING PROTEIN 1"/>
    <property type="match status" value="1"/>
</dbReference>
<dbReference type="Pfam" id="PF00240">
    <property type="entry name" value="ubiquitin"/>
    <property type="match status" value="1"/>
</dbReference>
<dbReference type="SUPFAM" id="SSF54236">
    <property type="entry name" value="Ubiquitin-like"/>
    <property type="match status" value="1"/>
</dbReference>
<dbReference type="PROSITE" id="PS50053">
    <property type="entry name" value="UBIQUITIN_2"/>
    <property type="match status" value="1"/>
</dbReference>
<reference key="1">
    <citation type="submission" date="2005-08" db="EMBL/GenBank/DDBJ databases">
        <authorList>
            <consortium name="NIH - Mammalian Gene Collection (MGC) project"/>
        </authorList>
    </citation>
    <scope>NUCLEOTIDE SEQUENCE [LARGE SCALE MRNA]</scope>
    <source>
        <strain>Hereford</strain>
        <tissue>Hypothalamus</tissue>
    </source>
</reference>
<feature type="chain" id="PRO_0000246184" description="Transmembrane and ubiquitin-like domain-containing protein 1">
    <location>
        <begin position="1"/>
        <end position="246"/>
    </location>
</feature>
<feature type="chain" id="PRO_0000435487" description="iHOPS" evidence="3">
    <location>
        <begin status="unknown"/>
        <end position="246"/>
    </location>
</feature>
<feature type="transmembrane region" description="Helical" evidence="4">
    <location>
        <begin position="11"/>
        <end position="31"/>
    </location>
</feature>
<feature type="transmembrane region" description="Helical" evidence="4">
    <location>
        <begin position="195"/>
        <end position="215"/>
    </location>
</feature>
<feature type="transmembrane region" description="Helical" evidence="4">
    <location>
        <begin position="221"/>
        <end position="241"/>
    </location>
</feature>
<feature type="domain" description="Ubiquitin-like" evidence="5">
    <location>
        <begin position="103"/>
        <end position="176"/>
    </location>
</feature>
<feature type="region of interest" description="Required to release iHOPS from membranes" evidence="3">
    <location>
        <begin position="2"/>
        <end position="30"/>
    </location>
</feature>
<feature type="region of interest" description="Disordered" evidence="6">
    <location>
        <begin position="35"/>
        <end position="102"/>
    </location>
</feature>
<feature type="compositionally biased region" description="Pro residues" evidence="6">
    <location>
        <begin position="40"/>
        <end position="50"/>
    </location>
</feature>
<feature type="modified residue" description="Phosphothreonine" evidence="2">
    <location>
        <position position="71"/>
    </location>
</feature>
<feature type="modified residue" description="Phosphothreonine" evidence="2">
    <location>
        <position position="92"/>
    </location>
</feature>
<feature type="modified residue" description="Phosphoserine" evidence="2">
    <location>
        <position position="98"/>
    </location>
</feature>
<feature type="modified residue" description="Phosphoserine" evidence="2">
    <location>
        <position position="127"/>
    </location>
</feature>
<accession>Q3ZBI9</accession>
<keyword id="KW-1003">Cell membrane</keyword>
<keyword id="KW-0963">Cytoplasm</keyword>
<keyword id="KW-0206">Cytoskeleton</keyword>
<keyword id="KW-0967">Endosome</keyword>
<keyword id="KW-0472">Membrane</keyword>
<keyword id="KW-0539">Nucleus</keyword>
<keyword id="KW-0597">Phosphoprotein</keyword>
<keyword id="KW-0628">Postsynaptic cell membrane</keyword>
<keyword id="KW-1185">Reference proteome</keyword>
<keyword id="KW-0770">Synapse</keyword>
<keyword id="KW-0812">Transmembrane</keyword>
<keyword id="KW-1133">Transmembrane helix</keyword>